<comment type="function">
    <text evidence="1">Involved in the regulation of the TOR signaling pathway. Seems to act as a regulator of PP2A catalytic activity.</text>
</comment>
<comment type="similarity">
    <text evidence="4">Belongs to the IGBP1/TAP42 family.</text>
</comment>
<reference key="1">
    <citation type="journal article" date="2003" name="Proc. Natl. Acad. Sci. U.S.A.">
        <title>A network of rice genes associated with stress response and seed development.</title>
        <authorList>
            <person name="Cooper B."/>
            <person name="Clarke J.D."/>
            <person name="Budworth P."/>
            <person name="Kreps J."/>
            <person name="Hutchison D."/>
            <person name="Park S."/>
            <person name="Guimil S."/>
            <person name="Dunn M."/>
            <person name="Luginbuehl P."/>
            <person name="Ellero C."/>
            <person name="Goff S.A."/>
            <person name="Glazebrook J."/>
        </authorList>
    </citation>
    <scope>NUCLEOTIDE SEQUENCE [MRNA]</scope>
</reference>
<reference key="2">
    <citation type="journal article" date="2005" name="BMC Biol.">
        <title>The sequence of rice chromosomes 11 and 12, rich in disease resistance genes and recent gene duplications.</title>
        <authorList>
            <consortium name="The rice chromosomes 11 and 12 sequencing consortia"/>
        </authorList>
    </citation>
    <scope>NUCLEOTIDE SEQUENCE [LARGE SCALE GENOMIC DNA]</scope>
    <source>
        <strain>cv. Nipponbare</strain>
    </source>
</reference>
<reference key="3">
    <citation type="journal article" date="2005" name="Nature">
        <title>The map-based sequence of the rice genome.</title>
        <authorList>
            <consortium name="International rice genome sequencing project (IRGSP)"/>
        </authorList>
    </citation>
    <scope>NUCLEOTIDE SEQUENCE [LARGE SCALE GENOMIC DNA]</scope>
    <source>
        <strain>cv. Nipponbare</strain>
    </source>
</reference>
<reference key="4">
    <citation type="journal article" date="2008" name="Nucleic Acids Res.">
        <title>The rice annotation project database (RAP-DB): 2008 update.</title>
        <authorList>
            <consortium name="The rice annotation project (RAP)"/>
        </authorList>
    </citation>
    <scope>GENOME REANNOTATION</scope>
    <source>
        <strain>cv. Nipponbare</strain>
    </source>
</reference>
<reference key="5">
    <citation type="journal article" date="2013" name="Rice">
        <title>Improvement of the Oryza sativa Nipponbare reference genome using next generation sequence and optical map data.</title>
        <authorList>
            <person name="Kawahara Y."/>
            <person name="de la Bastide M."/>
            <person name="Hamilton J.P."/>
            <person name="Kanamori H."/>
            <person name="McCombie W.R."/>
            <person name="Ouyang S."/>
            <person name="Schwartz D.C."/>
            <person name="Tanaka T."/>
            <person name="Wu J."/>
            <person name="Zhou S."/>
            <person name="Childs K.L."/>
            <person name="Davidson R.M."/>
            <person name="Lin H."/>
            <person name="Quesada-Ocampo L."/>
            <person name="Vaillancourt B."/>
            <person name="Sakai H."/>
            <person name="Lee S.S."/>
            <person name="Kim J."/>
            <person name="Numa H."/>
            <person name="Itoh T."/>
            <person name="Buell C.R."/>
            <person name="Matsumoto T."/>
        </authorList>
    </citation>
    <scope>GENOME REANNOTATION</scope>
    <source>
        <strain>cv. Nipponbare</strain>
    </source>
</reference>
<reference key="6">
    <citation type="journal article" date="2005" name="PLoS Biol.">
        <title>The genomes of Oryza sativa: a history of duplications.</title>
        <authorList>
            <person name="Yu J."/>
            <person name="Wang J."/>
            <person name="Lin W."/>
            <person name="Li S."/>
            <person name="Li H."/>
            <person name="Zhou J."/>
            <person name="Ni P."/>
            <person name="Dong W."/>
            <person name="Hu S."/>
            <person name="Zeng C."/>
            <person name="Zhang J."/>
            <person name="Zhang Y."/>
            <person name="Li R."/>
            <person name="Xu Z."/>
            <person name="Li S."/>
            <person name="Li X."/>
            <person name="Zheng H."/>
            <person name="Cong L."/>
            <person name="Lin L."/>
            <person name="Yin J."/>
            <person name="Geng J."/>
            <person name="Li G."/>
            <person name="Shi J."/>
            <person name="Liu J."/>
            <person name="Lv H."/>
            <person name="Li J."/>
            <person name="Wang J."/>
            <person name="Deng Y."/>
            <person name="Ran L."/>
            <person name="Shi X."/>
            <person name="Wang X."/>
            <person name="Wu Q."/>
            <person name="Li C."/>
            <person name="Ren X."/>
            <person name="Wang J."/>
            <person name="Wang X."/>
            <person name="Li D."/>
            <person name="Liu D."/>
            <person name="Zhang X."/>
            <person name="Ji Z."/>
            <person name="Zhao W."/>
            <person name="Sun Y."/>
            <person name="Zhang Z."/>
            <person name="Bao J."/>
            <person name="Han Y."/>
            <person name="Dong L."/>
            <person name="Ji J."/>
            <person name="Chen P."/>
            <person name="Wu S."/>
            <person name="Liu J."/>
            <person name="Xiao Y."/>
            <person name="Bu D."/>
            <person name="Tan J."/>
            <person name="Yang L."/>
            <person name="Ye C."/>
            <person name="Zhang J."/>
            <person name="Xu J."/>
            <person name="Zhou Y."/>
            <person name="Yu Y."/>
            <person name="Zhang B."/>
            <person name="Zhuang S."/>
            <person name="Wei H."/>
            <person name="Liu B."/>
            <person name="Lei M."/>
            <person name="Yu H."/>
            <person name="Li Y."/>
            <person name="Xu H."/>
            <person name="Wei S."/>
            <person name="He X."/>
            <person name="Fang L."/>
            <person name="Zhang Z."/>
            <person name="Zhang Y."/>
            <person name="Huang X."/>
            <person name="Su Z."/>
            <person name="Tong W."/>
            <person name="Li J."/>
            <person name="Tong Z."/>
            <person name="Li S."/>
            <person name="Ye J."/>
            <person name="Wang L."/>
            <person name="Fang L."/>
            <person name="Lei T."/>
            <person name="Chen C.-S."/>
            <person name="Chen H.-C."/>
            <person name="Xu Z."/>
            <person name="Li H."/>
            <person name="Huang H."/>
            <person name="Zhang F."/>
            <person name="Xu H."/>
            <person name="Li N."/>
            <person name="Zhao C."/>
            <person name="Li S."/>
            <person name="Dong L."/>
            <person name="Huang Y."/>
            <person name="Li L."/>
            <person name="Xi Y."/>
            <person name="Qi Q."/>
            <person name="Li W."/>
            <person name="Zhang B."/>
            <person name="Hu W."/>
            <person name="Zhang Y."/>
            <person name="Tian X."/>
            <person name="Jiao Y."/>
            <person name="Liang X."/>
            <person name="Jin J."/>
            <person name="Gao L."/>
            <person name="Zheng W."/>
            <person name="Hao B."/>
            <person name="Liu S.-M."/>
            <person name="Wang W."/>
            <person name="Yuan L."/>
            <person name="Cao M."/>
            <person name="McDermott J."/>
            <person name="Samudrala R."/>
            <person name="Wang J."/>
            <person name="Wong G.K.-S."/>
            <person name="Yang H."/>
        </authorList>
    </citation>
    <scope>NUCLEOTIDE SEQUENCE [LARGE SCALE GENOMIC DNA]</scope>
    <source>
        <strain>cv. Nipponbare</strain>
    </source>
</reference>
<reference key="7">
    <citation type="submission" date="2006-10" db="EMBL/GenBank/DDBJ databases">
        <title>Oryza sativa full length cDNA.</title>
        <authorList>
            <consortium name="The rice full-length cDNA consortium"/>
        </authorList>
    </citation>
    <scope>NUCLEOTIDE SEQUENCE [LARGE SCALE MRNA]</scope>
    <source>
        <strain>cv. Nipponbare</strain>
        <tissue evidence="7">Pistil</tissue>
    </source>
</reference>
<reference key="8">
    <citation type="journal article" date="2011" name="Plant Cell">
        <title>The PP2A regulatory subunit Tap46, a component of the TOR signaling pathway, modulates growth and metabolism in plants.</title>
        <authorList>
            <person name="Ahn C.S."/>
            <person name="Han J.-A."/>
            <person name="Lee H.-S."/>
            <person name="Lee S."/>
            <person name="Pai H.-S."/>
        </authorList>
    </citation>
    <scope>IDENTIFICATION</scope>
</reference>
<reference key="9">
    <citation type="journal article" date="2011" name="Plant Signal. Behav.">
        <title>Molecular functions of the PP2A regulatory subunit Tap46 in plants.</title>
        <authorList>
            <person name="Ahn C.S."/>
            <person name="Lee H.S."/>
            <person name="Pai H.S."/>
        </authorList>
    </citation>
    <scope>ADDENDUM</scope>
</reference>
<gene>
    <name evidence="3" type="primary">TAP46</name>
    <name evidence="5" type="ordered locus">LOC_Os12g04290</name>
    <name evidence="6" type="ordered locus">Os12g0137500</name>
    <name evidence="8" type="ORF">OsJ_35163</name>
</gene>
<name>TAP46_ORYSJ</name>
<dbReference type="EMBL" id="AY224436">
    <property type="protein sequence ID" value="AAO72555.1"/>
    <property type="molecule type" value="mRNA"/>
</dbReference>
<dbReference type="EMBL" id="DP000011">
    <property type="protein sequence ID" value="ABA95766.1"/>
    <property type="molecule type" value="Genomic_DNA"/>
</dbReference>
<dbReference type="EMBL" id="AP008218">
    <property type="protein sequence ID" value="BAF29128.1"/>
    <property type="molecule type" value="Genomic_DNA"/>
</dbReference>
<dbReference type="EMBL" id="AP014968">
    <property type="protein sequence ID" value="BAT15809.1"/>
    <property type="molecule type" value="Genomic_DNA"/>
</dbReference>
<dbReference type="EMBL" id="CM000149">
    <property type="protein sequence ID" value="EAZ19586.1"/>
    <property type="molecule type" value="Genomic_DNA"/>
</dbReference>
<dbReference type="EMBL" id="AK242643">
    <property type="protein sequence ID" value="BAH01312.1"/>
    <property type="molecule type" value="mRNA"/>
</dbReference>
<dbReference type="SMR" id="Q2QY04"/>
<dbReference type="FunCoup" id="Q2QY04">
    <property type="interactions" value="3339"/>
</dbReference>
<dbReference type="IntAct" id="Q2QY04">
    <property type="interactions" value="2"/>
</dbReference>
<dbReference type="STRING" id="39947.Q2QY04"/>
<dbReference type="PaxDb" id="39947-Q2QY04"/>
<dbReference type="EnsemblPlants" id="Os12t0137500-01">
    <property type="protein sequence ID" value="Os12t0137500-01"/>
    <property type="gene ID" value="Os12g0137500"/>
</dbReference>
<dbReference type="Gramene" id="Os12t0137500-01">
    <property type="protein sequence ID" value="Os12t0137500-01"/>
    <property type="gene ID" value="Os12g0137500"/>
</dbReference>
<dbReference type="KEGG" id="dosa:Os12g0137500"/>
<dbReference type="KEGG" id="osa:4351453"/>
<dbReference type="eggNOG" id="KOG2830">
    <property type="taxonomic scope" value="Eukaryota"/>
</dbReference>
<dbReference type="HOGENOM" id="CLU_041824_0_0_1"/>
<dbReference type="InParanoid" id="Q2QY04"/>
<dbReference type="OMA" id="ASKIHRT"/>
<dbReference type="OrthoDB" id="10261753at2759"/>
<dbReference type="Proteomes" id="UP000000763">
    <property type="component" value="Chromosome 12"/>
</dbReference>
<dbReference type="Proteomes" id="UP000007752">
    <property type="component" value="Chromosome 12"/>
</dbReference>
<dbReference type="Proteomes" id="UP000059680">
    <property type="component" value="Chromosome 12"/>
</dbReference>
<dbReference type="GO" id="GO:0005829">
    <property type="term" value="C:cytosol"/>
    <property type="evidence" value="ECO:0000318"/>
    <property type="project" value="GO_Central"/>
</dbReference>
<dbReference type="GO" id="GO:0051721">
    <property type="term" value="F:protein phosphatase 2A binding"/>
    <property type="evidence" value="ECO:0000318"/>
    <property type="project" value="GO_Central"/>
</dbReference>
<dbReference type="GO" id="GO:0035303">
    <property type="term" value="P:regulation of dephosphorylation"/>
    <property type="evidence" value="ECO:0000318"/>
    <property type="project" value="GO_Central"/>
</dbReference>
<dbReference type="GO" id="GO:0009966">
    <property type="term" value="P:regulation of signal transduction"/>
    <property type="evidence" value="ECO:0007669"/>
    <property type="project" value="InterPro"/>
</dbReference>
<dbReference type="FunFam" id="1.25.40.540:FF:000002">
    <property type="entry name" value="PP2A regulatory subunit TAP46"/>
    <property type="match status" value="1"/>
</dbReference>
<dbReference type="Gene3D" id="1.25.40.540">
    <property type="entry name" value="TAP42-like family"/>
    <property type="match status" value="1"/>
</dbReference>
<dbReference type="InterPro" id="IPR038511">
    <property type="entry name" value="TAP42/TAP46-like_sf"/>
</dbReference>
<dbReference type="InterPro" id="IPR007304">
    <property type="entry name" value="TAP46-like"/>
</dbReference>
<dbReference type="PANTHER" id="PTHR10933">
    <property type="entry name" value="IMMUNOGLOBULIN-BINDING PROTEIN 1"/>
    <property type="match status" value="1"/>
</dbReference>
<dbReference type="PANTHER" id="PTHR10933:SF9">
    <property type="entry name" value="IMMUNOGLOBULIN-BINDING PROTEIN 1"/>
    <property type="match status" value="1"/>
</dbReference>
<dbReference type="Pfam" id="PF04177">
    <property type="entry name" value="TAP42"/>
    <property type="match status" value="1"/>
</dbReference>
<keyword id="KW-1185">Reference proteome</keyword>
<sequence length="418" mass="47220">MVEVEEVSNKMQAQMRLHPAAAAEEEDADLPLPALFDKASHLHSLASSSSLDQEGIRKGVDLLRRCDEMVSKLGLFSSNETKDDVSTANLKYLLVPYYLGEMTERVAQEDRIPVLKASQDHLKEFISICEALELISEDELELSRQKQPDTMANRRAQKVARFKRQKAAETKLLEIKERKERRRRSLRAAALSAPIEAGEEDAFEDDGEEEREAWLATISLALCKAFDLLDMLKKEEEMLLAVKERQAKDGNAFAREMLDERTKKAEAWHHNAANRAPYSKPADPITCATFAQDVIEGRASVSQAHEHKHQPLIFGPASLVGGGLTSERERMAAQVFQPSYRLPTMSIEEAGLREMKMMEKWQERTAKMIQESNSAWHKDGSRSAQEDEDAEEEKARAWDDWKDDNPRGAGNKKLTPCG</sequence>
<protein>
    <recommendedName>
        <fullName evidence="3">PP2A regulatory subunit TAP46</fullName>
    </recommendedName>
</protein>
<proteinExistence type="evidence at transcript level"/>
<feature type="chain" id="PRO_0000440567" description="PP2A regulatory subunit TAP46">
    <location>
        <begin position="1"/>
        <end position="418"/>
    </location>
</feature>
<feature type="region of interest" description="Disordered" evidence="2">
    <location>
        <begin position="367"/>
        <end position="418"/>
    </location>
</feature>
<feature type="compositionally biased region" description="Basic and acidic residues" evidence="2">
    <location>
        <begin position="376"/>
        <end position="385"/>
    </location>
</feature>
<feature type="compositionally biased region" description="Basic and acidic residues" evidence="2">
    <location>
        <begin position="393"/>
        <end position="406"/>
    </location>
</feature>
<feature type="sequence conflict" description="In Ref. 1; AAO72555." evidence="4" ref="1">
    <original>V</original>
    <variation>A</variation>
    <location>
        <position position="159"/>
    </location>
</feature>
<feature type="sequence conflict" description="In Ref. 6; EAZ19586." evidence="4" ref="6">
    <original>A</original>
    <variation>G</variation>
    <location>
        <position position="273"/>
    </location>
</feature>
<accession>Q2QY04</accession>
<accession>A3CES3</accession>
<accession>Q84PC7</accession>
<evidence type="ECO:0000250" key="1">
    <source>
        <dbReference type="UniProtKB" id="D2K8N5"/>
    </source>
</evidence>
<evidence type="ECO:0000256" key="2">
    <source>
        <dbReference type="SAM" id="MobiDB-lite"/>
    </source>
</evidence>
<evidence type="ECO:0000303" key="3">
    <source>
    </source>
</evidence>
<evidence type="ECO:0000305" key="4"/>
<evidence type="ECO:0000312" key="5">
    <source>
        <dbReference type="EMBL" id="ABA95766.1"/>
    </source>
</evidence>
<evidence type="ECO:0000312" key="6">
    <source>
        <dbReference type="EMBL" id="BAF29128.1"/>
    </source>
</evidence>
<evidence type="ECO:0000312" key="7">
    <source>
        <dbReference type="EMBL" id="BAH01312.1"/>
    </source>
</evidence>
<evidence type="ECO:0000312" key="8">
    <source>
        <dbReference type="EMBL" id="EAZ19586.1"/>
    </source>
</evidence>
<organism>
    <name type="scientific">Oryza sativa subsp. japonica</name>
    <name type="common">Rice</name>
    <dbReference type="NCBI Taxonomy" id="39947"/>
    <lineage>
        <taxon>Eukaryota</taxon>
        <taxon>Viridiplantae</taxon>
        <taxon>Streptophyta</taxon>
        <taxon>Embryophyta</taxon>
        <taxon>Tracheophyta</taxon>
        <taxon>Spermatophyta</taxon>
        <taxon>Magnoliopsida</taxon>
        <taxon>Liliopsida</taxon>
        <taxon>Poales</taxon>
        <taxon>Poaceae</taxon>
        <taxon>BOP clade</taxon>
        <taxon>Oryzoideae</taxon>
        <taxon>Oryzeae</taxon>
        <taxon>Oryzinae</taxon>
        <taxon>Oryza</taxon>
        <taxon>Oryza sativa</taxon>
    </lineage>
</organism>